<gene>
    <name type="primary">papA5</name>
    <name type="ordered locus">Mmcs_2828</name>
</gene>
<proteinExistence type="inferred from homology"/>
<keyword id="KW-0012">Acyltransferase</keyword>
<keyword id="KW-0444">Lipid biosynthesis</keyword>
<keyword id="KW-0443">Lipid metabolism</keyword>
<keyword id="KW-0808">Transferase</keyword>
<feature type="chain" id="PRO_0000332107" description="Phthiocerol/phthiodiolone dimycocerosyl transferase">
    <location>
        <begin position="1"/>
        <end position="410"/>
    </location>
</feature>
<feature type="active site" description="Proton acceptor" evidence="1">
    <location>
        <position position="118"/>
    </location>
</feature>
<feature type="site" description="Structural role in the organization of the active site" evidence="1">
    <location>
        <position position="122"/>
    </location>
</feature>
<accession>Q1B849</accession>
<protein>
    <recommendedName>
        <fullName>Phthiocerol/phthiodiolone dimycocerosyl transferase</fullName>
        <ecNumber evidence="2">2.3.1.282</ecNumber>
    </recommendedName>
    <alternativeName>
        <fullName>Acyltransferase PapA5</fullName>
    </alternativeName>
    <alternativeName>
        <fullName>Phthiocerol/phthiodiolone O-acyltransferase</fullName>
    </alternativeName>
    <alternativeName>
        <fullName>Polyketide synthase-associated protein A5</fullName>
    </alternativeName>
</protein>
<name>PAPA5_MYCSS</name>
<evidence type="ECO:0000250" key="1"/>
<evidence type="ECO:0000250" key="2">
    <source>
        <dbReference type="UniProtKB" id="P9WIN5"/>
    </source>
</evidence>
<evidence type="ECO:0000305" key="3"/>
<comment type="function">
    <text evidence="2">Catalyzes diesterification of phthiocerol, phthiodiolone, and phenolphthiocerol with mycocerosic acids, the final step in the phthiocerol, phthiodiolone and phenolphthiocerol dimycocerosate esters (PDIM) synthesis. Can directly transfer the mycocerosate bound to the mycocerosic acid synthase (mas) onto the substrate alcohols.</text>
</comment>
<comment type="catalytic activity">
    <reaction evidence="2">
        <text>2 a mycocerosyl-[mycocerosic acid synthase] + a phthiocerol = a dimycocerosyl phthiocerol + 2 holo-[mycocerosic acid synthase].</text>
        <dbReference type="EC" id="2.3.1.282"/>
    </reaction>
</comment>
<comment type="catalytic activity">
    <reaction evidence="2">
        <text>2 a mycocerosyl-[mycocerosic acid synthase] + a phthiodiolone = a dimycocerosyl phthiodiolone + 2 holo-[mycocerosic acid synthase].</text>
        <dbReference type="EC" id="2.3.1.282"/>
    </reaction>
</comment>
<comment type="catalytic activity">
    <reaction evidence="2">
        <text>2 a mycocerosyl-[mycocerosic acid synthase] + a phenolphthiocerol = a dimycocerosyl phenolphthiocerol + 2 holo-[mycocerosic acid synthase].</text>
        <dbReference type="EC" id="2.3.1.282"/>
    </reaction>
</comment>
<comment type="subunit">
    <text evidence="2">Monomer. Interacts directly with the acyl carrier protein (ACP) domain of the mycocerosic acid synthase (mas) protein.</text>
</comment>
<comment type="domain">
    <text evidence="2">Consists of two structural domains that are related to each other.</text>
</comment>
<comment type="similarity">
    <text evidence="3">Belongs to the acyltransferase PapA5 family.</text>
</comment>
<comment type="sequence caution" evidence="3">
    <conflict type="erroneous initiation">
        <sequence resource="EMBL-CDS" id="ABG08935"/>
    </conflict>
</comment>
<organism>
    <name type="scientific">Mycobacterium sp. (strain MCS)</name>
    <dbReference type="NCBI Taxonomy" id="164756"/>
    <lineage>
        <taxon>Bacteria</taxon>
        <taxon>Bacillati</taxon>
        <taxon>Actinomycetota</taxon>
        <taxon>Actinomycetes</taxon>
        <taxon>Mycobacteriales</taxon>
        <taxon>Mycobacteriaceae</taxon>
        <taxon>Mycobacterium</taxon>
    </lineage>
</organism>
<reference key="1">
    <citation type="submission" date="2006-06" db="EMBL/GenBank/DDBJ databases">
        <title>Complete sequence of chromosome of Mycobacterium sp. MCS.</title>
        <authorList>
            <consortium name="US DOE Joint Genome Institute"/>
            <person name="Copeland A."/>
            <person name="Lucas S."/>
            <person name="Lapidus A."/>
            <person name="Barry K."/>
            <person name="Detter J.C."/>
            <person name="Glavina del Rio T."/>
            <person name="Hammon N."/>
            <person name="Israni S."/>
            <person name="Dalin E."/>
            <person name="Tice H."/>
            <person name="Pitluck S."/>
            <person name="Martinez M."/>
            <person name="Schmutz J."/>
            <person name="Larimer F."/>
            <person name="Land M."/>
            <person name="Hauser L."/>
            <person name="Kyrpides N."/>
            <person name="Kim E."/>
            <person name="Miller C.D."/>
            <person name="Hughes J.E."/>
            <person name="Anderson A.J."/>
            <person name="Sims R.C."/>
            <person name="Richardson P."/>
        </authorList>
    </citation>
    <scope>NUCLEOTIDE SEQUENCE [LARGE SCALE GENOMIC DNA]</scope>
    <source>
        <strain>MCS</strain>
    </source>
</reference>
<sequence>MAYSTSVIRRLAPSEKFFAETQTFTSITVLLDGTVDIDAMADAFDALLEAYPVYAGHLEPDSDGGFELVADDLLHPGLWVQFEGDPAPTDQLDQGVALIYLLVKPDSTPVEVTLFIHHSLADGTHMAGLLFELFARYTEVVTTGSAGPVSPNPAPEPIETVLEQRGIRKQQRSGLDRFIPAMFAYELPPKRVTTRSAAERPAAVPTTRCRLSKAETSSLVKYGRVNRLFVNNLISAAILLAEWQVRRTPHIPIPYVYNVNLRALVEPPVSATGCTLAIGVATYLAHITPQTTMVELARGIADMFQADLADGVVQQSLLHFNMQYEGAIPGLPDVVLSTNLGNAVAMSTPPGLEVVGVQSQFYRASSAVIDVYSFGVVGGELLIEHHVDAAETTIDLIRSLLRSVVSEHQH</sequence>
<dbReference type="EC" id="2.3.1.282" evidence="2"/>
<dbReference type="EMBL" id="CP000384">
    <property type="protein sequence ID" value="ABG08935.1"/>
    <property type="status" value="ALT_INIT"/>
    <property type="molecule type" value="Genomic_DNA"/>
</dbReference>
<dbReference type="SMR" id="Q1B849"/>
<dbReference type="KEGG" id="mmc:Mmcs_2828"/>
<dbReference type="HOGENOM" id="CLU_050374_1_0_11"/>
<dbReference type="BioCyc" id="MSP164756:G1G6O-2882-MONOMER"/>
<dbReference type="GO" id="GO:0016746">
    <property type="term" value="F:acyltransferase activity"/>
    <property type="evidence" value="ECO:0007669"/>
    <property type="project" value="UniProtKB-KW"/>
</dbReference>
<dbReference type="GO" id="GO:0006629">
    <property type="term" value="P:lipid metabolic process"/>
    <property type="evidence" value="ECO:0007669"/>
    <property type="project" value="UniProtKB-KW"/>
</dbReference>
<dbReference type="Gene3D" id="3.30.559.10">
    <property type="entry name" value="Chloramphenicol acetyltransferase-like domain"/>
    <property type="match status" value="1"/>
</dbReference>
<dbReference type="Gene3D" id="3.30.559.30">
    <property type="entry name" value="Nonribosomal peptide synthetase, condensation domain"/>
    <property type="match status" value="1"/>
</dbReference>
<dbReference type="InterPro" id="IPR023213">
    <property type="entry name" value="CAT-like_dom_sf"/>
</dbReference>
<dbReference type="InterPro" id="IPR031641">
    <property type="entry name" value="PapA_C"/>
</dbReference>
<dbReference type="NCBIfam" id="NF006789">
    <property type="entry name" value="PRK09294.1-3"/>
    <property type="match status" value="1"/>
</dbReference>
<dbReference type="Pfam" id="PF16911">
    <property type="entry name" value="PapA_C"/>
    <property type="match status" value="1"/>
</dbReference>
<dbReference type="SUPFAM" id="SSF52777">
    <property type="entry name" value="CoA-dependent acyltransferases"/>
    <property type="match status" value="2"/>
</dbReference>